<reference key="1">
    <citation type="journal article" date="2003" name="Toxicon">
        <title>The augertoxins: biochemical characterization of venom components from the toxoglossate gastropod Terebra subulata.</title>
        <authorList>
            <person name="Imperial J.S."/>
            <person name="Watkins M."/>
            <person name="Chen P."/>
            <person name="Hillyard D.R."/>
            <person name="Cruz L.J."/>
            <person name="Olivera B.M."/>
        </authorList>
    </citation>
    <scope>PROTEIN SEQUENCE</scope>
    <scope>MASS SPECTROMETRY</scope>
    <source>
        <tissue>Venom</tissue>
    </source>
</reference>
<evidence type="ECO:0000269" key="1">
    <source>
    </source>
</evidence>
<protein>
    <recommendedName>
        <fullName>Augerpeptide-s11a</fullName>
        <shortName>Agx-s11a</shortName>
    </recommendedName>
</protein>
<keyword id="KW-0903">Direct protein sequencing</keyword>
<keyword id="KW-1015">Disulfide bond</keyword>
<keyword id="KW-0964">Secreted</keyword>
<keyword id="KW-0800">Toxin</keyword>
<sequence>DCEQHTDCSAASGPVYCCQDSDCCGGVDYICTNYGQCVRHF</sequence>
<dbReference type="GO" id="GO:0005576">
    <property type="term" value="C:extracellular region"/>
    <property type="evidence" value="ECO:0007669"/>
    <property type="project" value="UniProtKB-SubCell"/>
</dbReference>
<dbReference type="GO" id="GO:0090729">
    <property type="term" value="F:toxin activity"/>
    <property type="evidence" value="ECO:0007669"/>
    <property type="project" value="UniProtKB-KW"/>
</dbReference>
<comment type="function">
    <text>Does not elicit any observable symptomatology in C.elegans.</text>
</comment>
<comment type="subcellular location">
    <subcellularLocation>
        <location>Secreted</location>
    </subcellularLocation>
</comment>
<comment type="tissue specificity">
    <text>Expressed by the venom duct.</text>
</comment>
<comment type="domain">
    <text>The cysteine framework is XI (C-C-CC-CC-C-C).</text>
</comment>
<comment type="PTM">
    <text>Contains 4 disulfide bonds.</text>
</comment>
<comment type="mass spectrometry"/>
<name>AXBA_TERSU</name>
<organism>
    <name type="scientific">Terebra subulata</name>
    <name type="common">Chocolate spotted auger</name>
    <name type="synonym">Buccinum subulatum</name>
    <dbReference type="NCBI Taxonomy" id="89435"/>
    <lineage>
        <taxon>Eukaryota</taxon>
        <taxon>Metazoa</taxon>
        <taxon>Spiralia</taxon>
        <taxon>Lophotrochozoa</taxon>
        <taxon>Mollusca</taxon>
        <taxon>Gastropoda</taxon>
        <taxon>Caenogastropoda</taxon>
        <taxon>Neogastropoda</taxon>
        <taxon>Conoidea</taxon>
        <taxon>Terebridae</taxon>
        <taxon>Terebra</taxon>
    </lineage>
</organism>
<feature type="chain" id="PRO_0000249197" description="Augerpeptide-s11a">
    <location>
        <begin position="1"/>
        <end position="41"/>
    </location>
</feature>
<accession>P0C1T8</accession>
<proteinExistence type="evidence at protein level"/>